<protein>
    <recommendedName>
        <fullName evidence="1">Ribosomal RNA small subunit methyltransferase G</fullName>
        <ecNumber evidence="1">2.1.1.-</ecNumber>
    </recommendedName>
    <alternativeName>
        <fullName evidence="1">16S rRNA 7-methylguanosine methyltransferase</fullName>
        <shortName evidence="1">16S rRNA m7G methyltransferase</shortName>
    </alternativeName>
</protein>
<reference key="1">
    <citation type="submission" date="2007-05" db="EMBL/GenBank/DDBJ databases">
        <title>Complete sequence of Dehalococcoides sp. BAV1.</title>
        <authorList>
            <consortium name="US DOE Joint Genome Institute"/>
            <person name="Copeland A."/>
            <person name="Lucas S."/>
            <person name="Lapidus A."/>
            <person name="Barry K."/>
            <person name="Detter J.C."/>
            <person name="Glavina del Rio T."/>
            <person name="Hammon N."/>
            <person name="Israni S."/>
            <person name="Pitluck S."/>
            <person name="Lowry S."/>
            <person name="Clum A."/>
            <person name="Schmutz J."/>
            <person name="Larimer F."/>
            <person name="Land M."/>
            <person name="Hauser L."/>
            <person name="Kyrpides N."/>
            <person name="Kim E."/>
            <person name="Ritalahti K.M."/>
            <person name="Loeffler F."/>
            <person name="Richardson P."/>
        </authorList>
    </citation>
    <scope>NUCLEOTIDE SEQUENCE [LARGE SCALE GENOMIC DNA]</scope>
    <source>
        <strain>ATCC BAA-2100 / JCM 16839 / KCTC 5957 / BAV1</strain>
    </source>
</reference>
<evidence type="ECO:0000255" key="1">
    <source>
        <dbReference type="HAMAP-Rule" id="MF_00074"/>
    </source>
</evidence>
<evidence type="ECO:0000305" key="2"/>
<dbReference type="EC" id="2.1.1.-" evidence="1"/>
<dbReference type="EMBL" id="CP000688">
    <property type="protein sequence ID" value="ABQ17286.1"/>
    <property type="status" value="ALT_INIT"/>
    <property type="molecule type" value="Genomic_DNA"/>
</dbReference>
<dbReference type="SMR" id="A5FR82"/>
<dbReference type="KEGG" id="deb:DehaBAV1_0702"/>
<dbReference type="PATRIC" id="fig|216389.18.peg.751"/>
<dbReference type="HOGENOM" id="CLU_065341_0_0_0"/>
<dbReference type="GO" id="GO:0005829">
    <property type="term" value="C:cytosol"/>
    <property type="evidence" value="ECO:0007669"/>
    <property type="project" value="TreeGrafter"/>
</dbReference>
<dbReference type="GO" id="GO:0070043">
    <property type="term" value="F:rRNA (guanine-N7-)-methyltransferase activity"/>
    <property type="evidence" value="ECO:0007669"/>
    <property type="project" value="UniProtKB-UniRule"/>
</dbReference>
<dbReference type="FunFam" id="3.40.50.150:FF:000041">
    <property type="entry name" value="Ribosomal RNA small subunit methyltransferase G"/>
    <property type="match status" value="1"/>
</dbReference>
<dbReference type="Gene3D" id="3.40.50.150">
    <property type="entry name" value="Vaccinia Virus protein VP39"/>
    <property type="match status" value="1"/>
</dbReference>
<dbReference type="HAMAP" id="MF_00074">
    <property type="entry name" value="16SrRNA_methyltr_G"/>
    <property type="match status" value="1"/>
</dbReference>
<dbReference type="InterPro" id="IPR003682">
    <property type="entry name" value="rRNA_ssu_MeTfrase_G"/>
</dbReference>
<dbReference type="InterPro" id="IPR029063">
    <property type="entry name" value="SAM-dependent_MTases_sf"/>
</dbReference>
<dbReference type="NCBIfam" id="TIGR00138">
    <property type="entry name" value="rsmG_gidB"/>
    <property type="match status" value="1"/>
</dbReference>
<dbReference type="PANTHER" id="PTHR31760">
    <property type="entry name" value="S-ADENOSYL-L-METHIONINE-DEPENDENT METHYLTRANSFERASES SUPERFAMILY PROTEIN"/>
    <property type="match status" value="1"/>
</dbReference>
<dbReference type="PANTHER" id="PTHR31760:SF0">
    <property type="entry name" value="S-ADENOSYL-L-METHIONINE-DEPENDENT METHYLTRANSFERASES SUPERFAMILY PROTEIN"/>
    <property type="match status" value="1"/>
</dbReference>
<dbReference type="Pfam" id="PF02527">
    <property type="entry name" value="GidB"/>
    <property type="match status" value="1"/>
</dbReference>
<dbReference type="PIRSF" id="PIRSF003078">
    <property type="entry name" value="GidB"/>
    <property type="match status" value="1"/>
</dbReference>
<dbReference type="SUPFAM" id="SSF53335">
    <property type="entry name" value="S-adenosyl-L-methionine-dependent methyltransferases"/>
    <property type="match status" value="1"/>
</dbReference>
<accession>A5FR82</accession>
<name>RSMG_DEHMB</name>
<sequence length="235" mass="25589">MNELVYGLSALGISLNSVQLGQFETYYQELVDYNSRINLTAITEYKDVQIKHFLDSVSLVLAGIKGDEKLLDVGSGAGFPGLPLKILFPAIQLGLLEATQKKARFLSEITVKLGLSGVEIISQRAEDTAQNPLYRQKYSLVTSRAVADMATLAELTLPFCAIGGRVIAPKKGDIEEEMDRAATAVKKMGGRVFKVIKVELPGLEDGRKLVLLEKISNTPALYPRRAGIPAKTPLI</sequence>
<proteinExistence type="inferred from homology"/>
<gene>
    <name evidence="1" type="primary">rsmG</name>
    <name type="ordered locus">DehaBAV1_0702</name>
</gene>
<organism>
    <name type="scientific">Dehalococcoides mccartyi (strain ATCC BAA-2100 / JCM 16839 / KCTC 5957 / BAV1)</name>
    <dbReference type="NCBI Taxonomy" id="216389"/>
    <lineage>
        <taxon>Bacteria</taxon>
        <taxon>Bacillati</taxon>
        <taxon>Chloroflexota</taxon>
        <taxon>Dehalococcoidia</taxon>
        <taxon>Dehalococcoidales</taxon>
        <taxon>Dehalococcoidaceae</taxon>
        <taxon>Dehalococcoides</taxon>
    </lineage>
</organism>
<keyword id="KW-0963">Cytoplasm</keyword>
<keyword id="KW-0489">Methyltransferase</keyword>
<keyword id="KW-0698">rRNA processing</keyword>
<keyword id="KW-0949">S-adenosyl-L-methionine</keyword>
<keyword id="KW-0808">Transferase</keyword>
<feature type="chain" id="PRO_0000335343" description="Ribosomal RNA small subunit methyltransferase G">
    <location>
        <begin position="1"/>
        <end position="235"/>
    </location>
</feature>
<feature type="binding site" evidence="1">
    <location>
        <position position="74"/>
    </location>
    <ligand>
        <name>S-adenosyl-L-methionine</name>
        <dbReference type="ChEBI" id="CHEBI:59789"/>
    </ligand>
</feature>
<feature type="binding site" evidence="1">
    <location>
        <position position="79"/>
    </location>
    <ligand>
        <name>S-adenosyl-L-methionine</name>
        <dbReference type="ChEBI" id="CHEBI:59789"/>
    </ligand>
</feature>
<feature type="binding site" evidence="1">
    <location>
        <begin position="97"/>
        <end position="99"/>
    </location>
    <ligand>
        <name>S-adenosyl-L-methionine</name>
        <dbReference type="ChEBI" id="CHEBI:59789"/>
    </ligand>
</feature>
<feature type="binding site" evidence="1">
    <location>
        <begin position="125"/>
        <end position="126"/>
    </location>
    <ligand>
        <name>S-adenosyl-L-methionine</name>
        <dbReference type="ChEBI" id="CHEBI:59789"/>
    </ligand>
</feature>
<feature type="binding site" evidence="1">
    <location>
        <position position="144"/>
    </location>
    <ligand>
        <name>S-adenosyl-L-methionine</name>
        <dbReference type="ChEBI" id="CHEBI:59789"/>
    </ligand>
</feature>
<comment type="function">
    <text evidence="1">Specifically methylates the N7 position of a guanine in 16S rRNA.</text>
</comment>
<comment type="subcellular location">
    <subcellularLocation>
        <location evidence="1">Cytoplasm</location>
    </subcellularLocation>
</comment>
<comment type="similarity">
    <text evidence="1">Belongs to the methyltransferase superfamily. RNA methyltransferase RsmG family.</text>
</comment>
<comment type="sequence caution" evidence="2">
    <conflict type="erroneous initiation">
        <sequence resource="EMBL-CDS" id="ABQ17286"/>
    </conflict>
</comment>